<sequence length="158" mass="16782">MTLALALYEPDIAQNAGTLARAVACLGLELHIVEPAGFPVGDAGFRRAGMDYLDRAVIRRHASFKAFEEWRRAEGRRLVLATTRGAVAHVDFAFTETDVVLLGRESAGVPEAVHESADARIVIPLNEGARSLNVALAGAMILGEALRQTGGFARTGTG</sequence>
<keyword id="KW-0963">Cytoplasm</keyword>
<keyword id="KW-0489">Methyltransferase</keyword>
<keyword id="KW-0949">S-adenosyl-L-methionine</keyword>
<keyword id="KW-0808">Transferase</keyword>
<keyword id="KW-0819">tRNA processing</keyword>
<reference key="1">
    <citation type="journal article" date="2012" name="Stand. Genomic Sci.">
        <title>Complete genome sequence of the facultatively chemolithoautotrophic and methylotrophic alpha Proteobacterium Starkeya novella type strain (ATCC 8093(T)).</title>
        <authorList>
            <person name="Kappler U."/>
            <person name="Davenport K."/>
            <person name="Beatson S."/>
            <person name="Lucas S."/>
            <person name="Lapidus A."/>
            <person name="Copeland A."/>
            <person name="Berry K.W."/>
            <person name="Glavina Del Rio T."/>
            <person name="Hammon N."/>
            <person name="Dalin E."/>
            <person name="Tice H."/>
            <person name="Pitluck S."/>
            <person name="Richardson P."/>
            <person name="Bruce D."/>
            <person name="Goodwin L.A."/>
            <person name="Han C."/>
            <person name="Tapia R."/>
            <person name="Detter J.C."/>
            <person name="Chang Y.J."/>
            <person name="Jeffries C.D."/>
            <person name="Land M."/>
            <person name="Hauser L."/>
            <person name="Kyrpides N.C."/>
            <person name="Goker M."/>
            <person name="Ivanova N."/>
            <person name="Klenk H.P."/>
            <person name="Woyke T."/>
        </authorList>
    </citation>
    <scope>NUCLEOTIDE SEQUENCE [LARGE SCALE GENOMIC DNA]</scope>
    <source>
        <strain>ATCC 8093 / DSM 506 / JCM 20403 / CCM 1077 / IAM 12100 / NBRC 12443 / NCIMB 10456</strain>
    </source>
</reference>
<protein>
    <recommendedName>
        <fullName evidence="1">tRNA (cytidine(34)-2'-O)-methyltransferase</fullName>
        <ecNumber evidence="1">2.1.1.207</ecNumber>
    </recommendedName>
    <alternativeName>
        <fullName evidence="1">tRNA (cytidine/uridine-2'-O-)-methyltransferase TrmL</fullName>
    </alternativeName>
</protein>
<feature type="chain" id="PRO_0000401953" description="tRNA (cytidine(34)-2'-O)-methyltransferase">
    <location>
        <begin position="1"/>
        <end position="158"/>
    </location>
</feature>
<feature type="binding site" evidence="1">
    <location>
        <position position="103"/>
    </location>
    <ligand>
        <name>S-adenosyl-L-methionine</name>
        <dbReference type="ChEBI" id="CHEBI:59789"/>
    </ligand>
</feature>
<feature type="binding site" evidence="1">
    <location>
        <position position="123"/>
    </location>
    <ligand>
        <name>S-adenosyl-L-methionine</name>
        <dbReference type="ChEBI" id="CHEBI:59789"/>
    </ligand>
</feature>
<feature type="binding site" evidence="1">
    <location>
        <position position="131"/>
    </location>
    <ligand>
        <name>S-adenosyl-L-methionine</name>
        <dbReference type="ChEBI" id="CHEBI:59789"/>
    </ligand>
</feature>
<organism>
    <name type="scientific">Ancylobacter novellus (strain ATCC 8093 / DSM 506 / JCM 20403 / CCM 1077 / IAM 12100 / NBRC 12443 / NCIMB 10456)</name>
    <name type="common">Starkeya novella</name>
    <dbReference type="NCBI Taxonomy" id="639283"/>
    <lineage>
        <taxon>Bacteria</taxon>
        <taxon>Pseudomonadati</taxon>
        <taxon>Pseudomonadota</taxon>
        <taxon>Alphaproteobacteria</taxon>
        <taxon>Hyphomicrobiales</taxon>
        <taxon>Xanthobacteraceae</taxon>
        <taxon>Ancylobacter</taxon>
    </lineage>
</organism>
<dbReference type="EC" id="2.1.1.207" evidence="1"/>
<dbReference type="EMBL" id="CP002026">
    <property type="protein sequence ID" value="ADH89775.1"/>
    <property type="molecule type" value="Genomic_DNA"/>
</dbReference>
<dbReference type="RefSeq" id="WP_013167279.1">
    <property type="nucleotide sequence ID" value="NC_014217.1"/>
</dbReference>
<dbReference type="SMR" id="D7A3L6"/>
<dbReference type="STRING" id="639283.Snov_2480"/>
<dbReference type="KEGG" id="sno:Snov_2480"/>
<dbReference type="eggNOG" id="COG0219">
    <property type="taxonomic scope" value="Bacteria"/>
</dbReference>
<dbReference type="HOGENOM" id="CLU_110125_2_0_5"/>
<dbReference type="OrthoDB" id="9789043at2"/>
<dbReference type="Proteomes" id="UP000006633">
    <property type="component" value="Chromosome"/>
</dbReference>
<dbReference type="GO" id="GO:0005737">
    <property type="term" value="C:cytoplasm"/>
    <property type="evidence" value="ECO:0007669"/>
    <property type="project" value="UniProtKB-SubCell"/>
</dbReference>
<dbReference type="GO" id="GO:0003723">
    <property type="term" value="F:RNA binding"/>
    <property type="evidence" value="ECO:0007669"/>
    <property type="project" value="InterPro"/>
</dbReference>
<dbReference type="GO" id="GO:0141102">
    <property type="term" value="F:tRNA (5-carboxymethylaminomethyluridine(34)-2'-O)-methyltransferase activity"/>
    <property type="evidence" value="ECO:0007669"/>
    <property type="project" value="RHEA"/>
</dbReference>
<dbReference type="GO" id="GO:0141098">
    <property type="term" value="F:tRNA (cytidine(34)-2'-O)-methyltransferase activity"/>
    <property type="evidence" value="ECO:0007669"/>
    <property type="project" value="RHEA"/>
</dbReference>
<dbReference type="GO" id="GO:0002130">
    <property type="term" value="P:wobble position ribose methylation"/>
    <property type="evidence" value="ECO:0007669"/>
    <property type="project" value="TreeGrafter"/>
</dbReference>
<dbReference type="CDD" id="cd18094">
    <property type="entry name" value="SpoU-like_TrmL"/>
    <property type="match status" value="1"/>
</dbReference>
<dbReference type="Gene3D" id="3.40.1280.10">
    <property type="match status" value="1"/>
</dbReference>
<dbReference type="HAMAP" id="MF_01885">
    <property type="entry name" value="tRNA_methyltr_TrmL"/>
    <property type="match status" value="1"/>
</dbReference>
<dbReference type="InterPro" id="IPR029028">
    <property type="entry name" value="Alpha/beta_knot_MTases"/>
</dbReference>
<dbReference type="InterPro" id="IPR001537">
    <property type="entry name" value="SpoU_MeTrfase"/>
</dbReference>
<dbReference type="InterPro" id="IPR016914">
    <property type="entry name" value="TrmL"/>
</dbReference>
<dbReference type="InterPro" id="IPR029026">
    <property type="entry name" value="tRNA_m1G_MTases_N"/>
</dbReference>
<dbReference type="PANTHER" id="PTHR42971">
    <property type="entry name" value="TRNA (CYTIDINE(34)-2'-O)-METHYLTRANSFERASE"/>
    <property type="match status" value="1"/>
</dbReference>
<dbReference type="PANTHER" id="PTHR42971:SF1">
    <property type="entry name" value="TRNA (CYTIDINE(34)-2'-O)-METHYLTRANSFERASE"/>
    <property type="match status" value="1"/>
</dbReference>
<dbReference type="Pfam" id="PF00588">
    <property type="entry name" value="SpoU_methylase"/>
    <property type="match status" value="1"/>
</dbReference>
<dbReference type="PIRSF" id="PIRSF029256">
    <property type="entry name" value="SpoU_TrmH_prd"/>
    <property type="match status" value="1"/>
</dbReference>
<dbReference type="SUPFAM" id="SSF75217">
    <property type="entry name" value="alpha/beta knot"/>
    <property type="match status" value="1"/>
</dbReference>
<gene>
    <name evidence="1" type="primary">trmL</name>
    <name type="ordered locus">Snov_2480</name>
</gene>
<proteinExistence type="inferred from homology"/>
<evidence type="ECO:0000255" key="1">
    <source>
        <dbReference type="HAMAP-Rule" id="MF_01885"/>
    </source>
</evidence>
<name>TRML_ANCN5</name>
<comment type="function">
    <text evidence="1">Methylates the ribose at the nucleotide 34 wobble position in the two leucyl isoacceptors tRNA(Leu)(CmAA) and tRNA(Leu)(cmnm5UmAA). Catalyzes the methyl transfer from S-adenosyl-L-methionine to the 2'-OH of the wobble nucleotide.</text>
</comment>
<comment type="catalytic activity">
    <reaction evidence="1">
        <text>cytidine(34) in tRNA + S-adenosyl-L-methionine = 2'-O-methylcytidine(34) in tRNA + S-adenosyl-L-homocysteine + H(+)</text>
        <dbReference type="Rhea" id="RHEA:43084"/>
        <dbReference type="Rhea" id="RHEA-COMP:10331"/>
        <dbReference type="Rhea" id="RHEA-COMP:10332"/>
        <dbReference type="ChEBI" id="CHEBI:15378"/>
        <dbReference type="ChEBI" id="CHEBI:57856"/>
        <dbReference type="ChEBI" id="CHEBI:59789"/>
        <dbReference type="ChEBI" id="CHEBI:74495"/>
        <dbReference type="ChEBI" id="CHEBI:82748"/>
        <dbReference type="EC" id="2.1.1.207"/>
    </reaction>
</comment>
<comment type="catalytic activity">
    <reaction evidence="1">
        <text>5-carboxymethylaminomethyluridine(34) in tRNA(Leu) + S-adenosyl-L-methionine = 5-carboxymethylaminomethyl-2'-O-methyluridine(34) in tRNA(Leu) + S-adenosyl-L-homocysteine + H(+)</text>
        <dbReference type="Rhea" id="RHEA:43088"/>
        <dbReference type="Rhea" id="RHEA-COMP:10333"/>
        <dbReference type="Rhea" id="RHEA-COMP:10334"/>
        <dbReference type="ChEBI" id="CHEBI:15378"/>
        <dbReference type="ChEBI" id="CHEBI:57856"/>
        <dbReference type="ChEBI" id="CHEBI:59789"/>
        <dbReference type="ChEBI" id="CHEBI:74508"/>
        <dbReference type="ChEBI" id="CHEBI:74511"/>
        <dbReference type="EC" id="2.1.1.207"/>
    </reaction>
</comment>
<comment type="subunit">
    <text evidence="1">Homodimer.</text>
</comment>
<comment type="subcellular location">
    <subcellularLocation>
        <location evidence="1">Cytoplasm</location>
    </subcellularLocation>
</comment>
<comment type="similarity">
    <text evidence="1">Belongs to the class IV-like SAM-binding methyltransferase superfamily. RNA methyltransferase TrmH family. TrmL subfamily.</text>
</comment>
<accession>D7A3L6</accession>